<keyword id="KW-0028">Amino-acid biosynthesis</keyword>
<keyword id="KW-0057">Aromatic amino acid biosynthesis</keyword>
<keyword id="KW-0521">NADP</keyword>
<keyword id="KW-0560">Oxidoreductase</keyword>
<keyword id="KW-1185">Reference proteome</keyword>
<keyword id="KW-0827">Tyrosine biosynthesis</keyword>
<reference key="1">
    <citation type="journal article" date="1989" name="Gene">
        <title>Characterization of the prephenate dehydrogenase-encoding gene, TYR1, from Saccharomyces cerevisiae.</title>
        <authorList>
            <person name="Mannhaupt G."/>
            <person name="Stucka R."/>
            <person name="Pilz U."/>
            <person name="Schwarzlose C."/>
            <person name="Feldmann H."/>
        </authorList>
    </citation>
    <scope>NUCLEOTIDE SEQUENCE [GENOMIC DNA]</scope>
</reference>
<reference key="2">
    <citation type="journal article" date="1994" name="EMBO J.">
        <title>Complete DNA sequence of yeast chromosome II.</title>
        <authorList>
            <person name="Feldmann H."/>
            <person name="Aigle M."/>
            <person name="Aljinovic G."/>
            <person name="Andre B."/>
            <person name="Baclet M.C."/>
            <person name="Barthe C."/>
            <person name="Baur A."/>
            <person name="Becam A.-M."/>
            <person name="Biteau N."/>
            <person name="Boles E."/>
            <person name="Brandt T."/>
            <person name="Brendel M."/>
            <person name="Brueckner M."/>
            <person name="Bussereau F."/>
            <person name="Christiansen C."/>
            <person name="Contreras R."/>
            <person name="Crouzet M."/>
            <person name="Cziepluch C."/>
            <person name="Demolis N."/>
            <person name="Delaveau T."/>
            <person name="Doignon F."/>
            <person name="Domdey H."/>
            <person name="Duesterhus S."/>
            <person name="Dubois E."/>
            <person name="Dujon B."/>
            <person name="El Bakkoury M."/>
            <person name="Entian K.-D."/>
            <person name="Feuermann M."/>
            <person name="Fiers W."/>
            <person name="Fobo G.M."/>
            <person name="Fritz C."/>
            <person name="Gassenhuber J."/>
            <person name="Glansdorff N."/>
            <person name="Goffeau A."/>
            <person name="Grivell L.A."/>
            <person name="de Haan M."/>
            <person name="Hein C."/>
            <person name="Herbert C.J."/>
            <person name="Hollenberg C.P."/>
            <person name="Holmstroem K."/>
            <person name="Jacq C."/>
            <person name="Jacquet M."/>
            <person name="Jauniaux J.-C."/>
            <person name="Jonniaux J.-L."/>
            <person name="Kallesoee T."/>
            <person name="Kiesau P."/>
            <person name="Kirchrath L."/>
            <person name="Koetter P."/>
            <person name="Korol S."/>
            <person name="Liebl S."/>
            <person name="Logghe M."/>
            <person name="Lohan A.J.E."/>
            <person name="Louis E.J."/>
            <person name="Li Z.Y."/>
            <person name="Maat M.J."/>
            <person name="Mallet L."/>
            <person name="Mannhaupt G."/>
            <person name="Messenguy F."/>
            <person name="Miosga T."/>
            <person name="Molemans F."/>
            <person name="Mueller S."/>
            <person name="Nasr F."/>
            <person name="Obermaier B."/>
            <person name="Perea J."/>
            <person name="Pierard A."/>
            <person name="Piravandi E."/>
            <person name="Pohl F.M."/>
            <person name="Pohl T.M."/>
            <person name="Potier S."/>
            <person name="Proft M."/>
            <person name="Purnelle B."/>
            <person name="Ramezani Rad M."/>
            <person name="Rieger M."/>
            <person name="Rose M."/>
            <person name="Schaaff-Gerstenschlaeger I."/>
            <person name="Scherens B."/>
            <person name="Schwarzlose C."/>
            <person name="Skala J."/>
            <person name="Slonimski P.P."/>
            <person name="Smits P.H.M."/>
            <person name="Souciet J.-L."/>
            <person name="Steensma H.Y."/>
            <person name="Stucka R."/>
            <person name="Urrestarazu L.A."/>
            <person name="van der Aart Q.J.M."/>
            <person name="Van Dyck L."/>
            <person name="Vassarotti A."/>
            <person name="Vetter I."/>
            <person name="Vierendeels F."/>
            <person name="Vissers S."/>
            <person name="Wagner G."/>
            <person name="de Wergifosse P."/>
            <person name="Wolfe K.H."/>
            <person name="Zagulski M."/>
            <person name="Zimmermann F.K."/>
            <person name="Mewes H.-W."/>
            <person name="Kleine K."/>
        </authorList>
    </citation>
    <scope>NUCLEOTIDE SEQUENCE [LARGE SCALE GENOMIC DNA]</scope>
    <source>
        <strain>ATCC 204508 / S288c</strain>
    </source>
</reference>
<reference key="3">
    <citation type="journal article" date="2014" name="G3 (Bethesda)">
        <title>The reference genome sequence of Saccharomyces cerevisiae: Then and now.</title>
        <authorList>
            <person name="Engel S.R."/>
            <person name="Dietrich F.S."/>
            <person name="Fisk D.G."/>
            <person name="Binkley G."/>
            <person name="Balakrishnan R."/>
            <person name="Costanzo M.C."/>
            <person name="Dwight S.S."/>
            <person name="Hitz B.C."/>
            <person name="Karra K."/>
            <person name="Nash R.S."/>
            <person name="Weng S."/>
            <person name="Wong E.D."/>
            <person name="Lloyd P."/>
            <person name="Skrzypek M.S."/>
            <person name="Miyasato S.R."/>
            <person name="Simison M."/>
            <person name="Cherry J.M."/>
        </authorList>
    </citation>
    <scope>GENOME REANNOTATION</scope>
    <source>
        <strain>ATCC 204508 / S288c</strain>
    </source>
</reference>
<reference key="4">
    <citation type="journal article" date="2003" name="Nature">
        <title>Global analysis of protein expression in yeast.</title>
        <authorList>
            <person name="Ghaemmaghami S."/>
            <person name="Huh W.-K."/>
            <person name="Bower K."/>
            <person name="Howson R.W."/>
            <person name="Belle A."/>
            <person name="Dephoure N."/>
            <person name="O'Shea E.K."/>
            <person name="Weissman J.S."/>
        </authorList>
    </citation>
    <scope>LEVEL OF PROTEIN EXPRESSION [LARGE SCALE ANALYSIS]</scope>
</reference>
<protein>
    <recommendedName>
        <fullName>Prephenate dehydrogenase [NADP(+)]</fullName>
        <shortName>PRDH</shortName>
        <ecNumber>1.3.1.13</ecNumber>
    </recommendedName>
</protein>
<dbReference type="EC" id="1.3.1.13"/>
<dbReference type="EMBL" id="Z36035">
    <property type="protein sequence ID" value="CAA85127.1"/>
    <property type="molecule type" value="Genomic_DNA"/>
</dbReference>
<dbReference type="EMBL" id="BK006936">
    <property type="protein sequence ID" value="DAA07282.1"/>
    <property type="molecule type" value="Genomic_DNA"/>
</dbReference>
<dbReference type="PIR" id="S46037">
    <property type="entry name" value="S46037"/>
</dbReference>
<dbReference type="RefSeq" id="NP_009725.1">
    <property type="nucleotide sequence ID" value="NM_001178514.1"/>
</dbReference>
<dbReference type="SMR" id="P20049"/>
<dbReference type="BioGRID" id="32866">
    <property type="interactions" value="119"/>
</dbReference>
<dbReference type="DIP" id="DIP-4627N"/>
<dbReference type="FunCoup" id="P20049">
    <property type="interactions" value="329"/>
</dbReference>
<dbReference type="IntAct" id="P20049">
    <property type="interactions" value="12"/>
</dbReference>
<dbReference type="MINT" id="P20049"/>
<dbReference type="STRING" id="4932.YBR166C"/>
<dbReference type="iPTMnet" id="P20049"/>
<dbReference type="PaxDb" id="4932-YBR166C"/>
<dbReference type="PeptideAtlas" id="P20049"/>
<dbReference type="EnsemblFungi" id="YBR166C_mRNA">
    <property type="protein sequence ID" value="YBR166C"/>
    <property type="gene ID" value="YBR166C"/>
</dbReference>
<dbReference type="GeneID" id="852464"/>
<dbReference type="KEGG" id="sce:YBR166C"/>
<dbReference type="AGR" id="SGD:S000000370"/>
<dbReference type="SGD" id="S000000370">
    <property type="gene designation" value="TYR1"/>
</dbReference>
<dbReference type="VEuPathDB" id="FungiDB:YBR166C"/>
<dbReference type="eggNOG" id="KOG2380">
    <property type="taxonomic scope" value="Eukaryota"/>
</dbReference>
<dbReference type="HOGENOM" id="CLU_031403_1_0_1"/>
<dbReference type="InParanoid" id="P20049"/>
<dbReference type="OMA" id="WRVNACD"/>
<dbReference type="OrthoDB" id="5399569at2759"/>
<dbReference type="BioCyc" id="YEAST:YBR166C-MONOMER"/>
<dbReference type="UniPathway" id="UPA00122">
    <property type="reaction ID" value="UER00962"/>
</dbReference>
<dbReference type="BioGRID-ORCS" id="852464">
    <property type="hits" value="0 hits in 10 CRISPR screens"/>
</dbReference>
<dbReference type="PRO" id="PR:P20049"/>
<dbReference type="Proteomes" id="UP000002311">
    <property type="component" value="Chromosome II"/>
</dbReference>
<dbReference type="RNAct" id="P20049">
    <property type="molecule type" value="protein"/>
</dbReference>
<dbReference type="GO" id="GO:0005737">
    <property type="term" value="C:cytoplasm"/>
    <property type="evidence" value="ECO:0007005"/>
    <property type="project" value="SGD"/>
</dbReference>
<dbReference type="GO" id="GO:0070403">
    <property type="term" value="F:NAD+ binding"/>
    <property type="evidence" value="ECO:0000318"/>
    <property type="project" value="GO_Central"/>
</dbReference>
<dbReference type="GO" id="GO:0050661">
    <property type="term" value="F:NADP binding"/>
    <property type="evidence" value="ECO:0007669"/>
    <property type="project" value="InterPro"/>
</dbReference>
<dbReference type="GO" id="GO:0008977">
    <property type="term" value="F:prephenate dehydrogenase (NAD+) activity"/>
    <property type="evidence" value="ECO:0000314"/>
    <property type="project" value="SGD"/>
</dbReference>
<dbReference type="GO" id="GO:0004665">
    <property type="term" value="F:prephenate dehydrogenase (NADP+) activity"/>
    <property type="evidence" value="ECO:0007669"/>
    <property type="project" value="UniProtKB-EC"/>
</dbReference>
<dbReference type="GO" id="GO:0006571">
    <property type="term" value="P:tyrosine biosynthetic process"/>
    <property type="evidence" value="ECO:0000314"/>
    <property type="project" value="SGD"/>
</dbReference>
<dbReference type="GO" id="GO:0006570">
    <property type="term" value="P:tyrosine metabolic process"/>
    <property type="evidence" value="ECO:0000315"/>
    <property type="project" value="SGD"/>
</dbReference>
<dbReference type="FunFam" id="1.10.3660.10:FF:000002">
    <property type="entry name" value="Prephenate dehydrogenase [NADP(+)]"/>
    <property type="match status" value="1"/>
</dbReference>
<dbReference type="FunFam" id="1.10.3660.10:FF:000004">
    <property type="entry name" value="Prephenate dehydrogenase [NADP(+)]"/>
    <property type="match status" value="1"/>
</dbReference>
<dbReference type="FunFam" id="3.40.50.720:FF:000339">
    <property type="entry name" value="Prephenate dehydrogenase [NADP(+)]"/>
    <property type="match status" value="1"/>
</dbReference>
<dbReference type="Gene3D" id="1.10.3660.10">
    <property type="entry name" value="6-phosphogluconate dehydrogenase C-terminal like domain"/>
    <property type="match status" value="2"/>
</dbReference>
<dbReference type="Gene3D" id="3.40.50.720">
    <property type="entry name" value="NAD(P)-binding Rossmann-like Domain"/>
    <property type="match status" value="1"/>
</dbReference>
<dbReference type="InterPro" id="IPR008927">
    <property type="entry name" value="6-PGluconate_DH-like_C_sf"/>
</dbReference>
<dbReference type="InterPro" id="IPR006115">
    <property type="entry name" value="6PGDH_NADP-bd"/>
</dbReference>
<dbReference type="InterPro" id="IPR036291">
    <property type="entry name" value="NAD(P)-bd_dom_sf"/>
</dbReference>
<dbReference type="InterPro" id="IPR050812">
    <property type="entry name" value="Preph/Arog_dehydrog"/>
</dbReference>
<dbReference type="InterPro" id="IPR003099">
    <property type="entry name" value="Prephen_DH"/>
</dbReference>
<dbReference type="InterPro" id="IPR012385">
    <property type="entry name" value="Prephenate_DH_fun"/>
</dbReference>
<dbReference type="PANTHER" id="PTHR21363">
    <property type="entry name" value="PREPHENATE DEHYDROGENASE"/>
    <property type="match status" value="1"/>
</dbReference>
<dbReference type="PANTHER" id="PTHR21363:SF0">
    <property type="entry name" value="PREPHENATE DEHYDROGENASE [NADP(+)]"/>
    <property type="match status" value="1"/>
</dbReference>
<dbReference type="Pfam" id="PF03446">
    <property type="entry name" value="NAD_binding_2"/>
    <property type="match status" value="1"/>
</dbReference>
<dbReference type="PIRSF" id="PIRSF036510">
    <property type="entry name" value="PDH_fung"/>
    <property type="match status" value="1"/>
</dbReference>
<dbReference type="SUPFAM" id="SSF48179">
    <property type="entry name" value="6-phosphogluconate dehydrogenase C-terminal domain-like"/>
    <property type="match status" value="2"/>
</dbReference>
<dbReference type="SUPFAM" id="SSF51735">
    <property type="entry name" value="NAD(P)-binding Rossmann-fold domains"/>
    <property type="match status" value="1"/>
</dbReference>
<dbReference type="PROSITE" id="PS51176">
    <property type="entry name" value="PDH_ADH"/>
    <property type="match status" value="1"/>
</dbReference>
<sequence>MVSEDKIEQWKATKVIGIIGLGDMGLLYANKFTDAGWGVICCDREEYYDELKEKYASAKFELVKNGHLVSRQSDYIIYSVEASNISKIVATYGPSSKVGTIVGGQTSCKLPEIEAFEKYLPKDCDIITVHSLHGPKVNTEGQPLVIINHRSQYPESFEFVNSVMACLKSKQVYLTYEEHDKITADTQAVTHAAFLSMGSAWAKIKIYPWTLGVNKWYGGLENVKVNISLRIYSNKWHVYAGLAITNPSAHQQILQYATSATELFSLMIDNKEQELTDRLLKAKQFVFGKHTGLLLLDDTILEKYSLSKSSIGNSNNCKPVPNSHLSLLAIVDSWFQLGIDPYDHMICSTPLFRIFLGVSEYLFLKPGLLEQTIDAAIHDKSFIKDDLEFVISAREWSSVVSFANFDIYKKQFQSVQKFFEPMLPEANLIGNEMIKTILSHSSDRSAAEKRNT</sequence>
<gene>
    <name type="primary">TYR1</name>
    <name type="ordered locus">YBR166C</name>
    <name type="ORF">YBR1218</name>
</gene>
<feature type="chain" id="PRO_0000119208" description="Prephenate dehydrogenase [NADP(+)]">
    <location>
        <begin position="1"/>
        <end position="452"/>
    </location>
</feature>
<feature type="domain" description="Prephenate/arogenate dehydrogenase" evidence="2">
    <location>
        <begin position="14"/>
        <end position="297"/>
    </location>
</feature>
<feature type="binding site" evidence="1">
    <location>
        <begin position="14"/>
        <end position="43"/>
    </location>
    <ligand>
        <name>NADP(+)</name>
        <dbReference type="ChEBI" id="CHEBI:58349"/>
    </ligand>
</feature>
<feature type="sequence conflict" description="In Ref. 1." evidence="4" ref="1">
    <original>G</original>
    <variation>S</variation>
    <location>
        <position position="38"/>
    </location>
</feature>
<feature type="sequence conflict" description="In Ref. 1." evidence="4" ref="1">
    <original>IKIYPWTL</original>
    <variation>DKDSSLDS</variation>
    <location>
        <begin position="204"/>
        <end position="211"/>
    </location>
</feature>
<feature type="sequence conflict" description="In Ref. 1." evidence="4" ref="1">
    <original>GN</original>
    <variation>SD</variation>
    <location>
        <begin position="312"/>
        <end position="313"/>
    </location>
</feature>
<feature type="sequence conflict" description="In Ref. 1." evidence="4" ref="1">
    <original>MIKTILSHSSDRSAAEKRNT</original>
    <variation>DDKNHSESF</variation>
    <location>
        <begin position="433"/>
        <end position="452"/>
    </location>
</feature>
<comment type="catalytic activity">
    <reaction>
        <text>prephenate + NADP(+) = 3-(4-hydroxyphenyl)pyruvate + CO2 + NADPH</text>
        <dbReference type="Rhea" id="RHEA:21640"/>
        <dbReference type="ChEBI" id="CHEBI:16526"/>
        <dbReference type="ChEBI" id="CHEBI:29934"/>
        <dbReference type="ChEBI" id="CHEBI:36242"/>
        <dbReference type="ChEBI" id="CHEBI:57783"/>
        <dbReference type="ChEBI" id="CHEBI:58349"/>
        <dbReference type="EC" id="1.3.1.13"/>
    </reaction>
</comment>
<comment type="pathway">
    <text>Amino-acid biosynthesis; L-tyrosine biosynthesis; (4-hydroxyphenyl)pyruvate from prephenate (NADP(+) route): step 1/1.</text>
</comment>
<comment type="induction">
    <text>Presence of Phe represses the TYR1 gene expression.</text>
</comment>
<comment type="miscellaneous">
    <text evidence="3">Present with 2180 molecules/cell in log phase SD medium.</text>
</comment>
<comment type="similarity">
    <text evidence="4">Belongs to the prephenate/arogenate dehydrogenase family.</text>
</comment>
<name>TYR1_YEAST</name>
<proteinExistence type="evidence at protein level"/>
<evidence type="ECO:0000255" key="1"/>
<evidence type="ECO:0000255" key="2">
    <source>
        <dbReference type="PROSITE-ProRule" id="PRU00522"/>
    </source>
</evidence>
<evidence type="ECO:0000269" key="3">
    <source>
    </source>
</evidence>
<evidence type="ECO:0000305" key="4"/>
<accession>P20049</accession>
<accession>D6VQG2</accession>
<organism>
    <name type="scientific">Saccharomyces cerevisiae (strain ATCC 204508 / S288c)</name>
    <name type="common">Baker's yeast</name>
    <dbReference type="NCBI Taxonomy" id="559292"/>
    <lineage>
        <taxon>Eukaryota</taxon>
        <taxon>Fungi</taxon>
        <taxon>Dikarya</taxon>
        <taxon>Ascomycota</taxon>
        <taxon>Saccharomycotina</taxon>
        <taxon>Saccharomycetes</taxon>
        <taxon>Saccharomycetales</taxon>
        <taxon>Saccharomycetaceae</taxon>
        <taxon>Saccharomyces</taxon>
    </lineage>
</organism>